<keyword id="KW-0067">ATP-binding</keyword>
<keyword id="KW-0963">Cytoplasm</keyword>
<keyword id="KW-0418">Kinase</keyword>
<keyword id="KW-0547">Nucleotide-binding</keyword>
<keyword id="KW-0808">Transferase</keyword>
<name>URK_LACJO</name>
<evidence type="ECO:0000255" key="1">
    <source>
        <dbReference type="HAMAP-Rule" id="MF_00551"/>
    </source>
</evidence>
<sequence length="211" mass="24210">MQSKRPIIIGIAGGSGSGKTTIAHEIYDQLQQDDHILIMTQDSYYKNNDNLSMADRKKINYDHPDAFDMPLLVEQLRQLMDYKAVEMPVYDFTAHTRSEKTIHTEPADIIILEGILVLGEENLRDLMSIKVFVDTDDDIRFIRRLERDTQERGRSVESVINQYLATVKPMYNQFIEPTKRYADIIVPEGGENDVAIDMLTTKIRSVLSTVK</sequence>
<proteinExistence type="inferred from homology"/>
<protein>
    <recommendedName>
        <fullName evidence="1">Uridine kinase</fullName>
        <ecNumber evidence="1">2.7.1.48</ecNumber>
    </recommendedName>
    <alternativeName>
        <fullName evidence="1">Cytidine monophosphokinase</fullName>
    </alternativeName>
    <alternativeName>
        <fullName evidence="1">Uridine monophosphokinase</fullName>
    </alternativeName>
</protein>
<accession>Q74KI9</accession>
<dbReference type="EC" id="2.7.1.48" evidence="1"/>
<dbReference type="EMBL" id="AE017198">
    <property type="protein sequence ID" value="AAS08581.1"/>
    <property type="molecule type" value="Genomic_DNA"/>
</dbReference>
<dbReference type="SMR" id="Q74KI9"/>
<dbReference type="KEGG" id="ljo:LJ_0763"/>
<dbReference type="eggNOG" id="COG0572">
    <property type="taxonomic scope" value="Bacteria"/>
</dbReference>
<dbReference type="HOGENOM" id="CLU_021278_1_2_9"/>
<dbReference type="UniPathway" id="UPA00574">
    <property type="reaction ID" value="UER00637"/>
</dbReference>
<dbReference type="UniPathway" id="UPA00579">
    <property type="reaction ID" value="UER00640"/>
</dbReference>
<dbReference type="Proteomes" id="UP000000581">
    <property type="component" value="Chromosome"/>
</dbReference>
<dbReference type="GO" id="GO:0005737">
    <property type="term" value="C:cytoplasm"/>
    <property type="evidence" value="ECO:0007669"/>
    <property type="project" value="UniProtKB-SubCell"/>
</dbReference>
<dbReference type="GO" id="GO:0005524">
    <property type="term" value="F:ATP binding"/>
    <property type="evidence" value="ECO:0007669"/>
    <property type="project" value="UniProtKB-UniRule"/>
</dbReference>
<dbReference type="GO" id="GO:0016887">
    <property type="term" value="F:ATP hydrolysis activity"/>
    <property type="evidence" value="ECO:0007669"/>
    <property type="project" value="InterPro"/>
</dbReference>
<dbReference type="GO" id="GO:0043771">
    <property type="term" value="F:cytidine kinase activity"/>
    <property type="evidence" value="ECO:0007669"/>
    <property type="project" value="RHEA"/>
</dbReference>
<dbReference type="GO" id="GO:0004849">
    <property type="term" value="F:uridine kinase activity"/>
    <property type="evidence" value="ECO:0007669"/>
    <property type="project" value="UniProtKB-UniRule"/>
</dbReference>
<dbReference type="GO" id="GO:0044211">
    <property type="term" value="P:CTP salvage"/>
    <property type="evidence" value="ECO:0007669"/>
    <property type="project" value="UniProtKB-UniRule"/>
</dbReference>
<dbReference type="GO" id="GO:0044206">
    <property type="term" value="P:UMP salvage"/>
    <property type="evidence" value="ECO:0007669"/>
    <property type="project" value="UniProtKB-UniRule"/>
</dbReference>
<dbReference type="CDD" id="cd02023">
    <property type="entry name" value="UMPK"/>
    <property type="match status" value="1"/>
</dbReference>
<dbReference type="FunFam" id="3.40.50.300:FF:000339">
    <property type="entry name" value="Uridine kinase"/>
    <property type="match status" value="1"/>
</dbReference>
<dbReference type="Gene3D" id="3.40.50.300">
    <property type="entry name" value="P-loop containing nucleotide triphosphate hydrolases"/>
    <property type="match status" value="1"/>
</dbReference>
<dbReference type="HAMAP" id="MF_00551">
    <property type="entry name" value="Uridine_kinase"/>
    <property type="match status" value="1"/>
</dbReference>
<dbReference type="InterPro" id="IPR003593">
    <property type="entry name" value="AAA+_ATPase"/>
</dbReference>
<dbReference type="InterPro" id="IPR027417">
    <property type="entry name" value="P-loop_NTPase"/>
</dbReference>
<dbReference type="InterPro" id="IPR006083">
    <property type="entry name" value="PRK/URK"/>
</dbReference>
<dbReference type="InterPro" id="IPR026008">
    <property type="entry name" value="Uridine_kinase"/>
</dbReference>
<dbReference type="InterPro" id="IPR000764">
    <property type="entry name" value="Uridine_kinase-like"/>
</dbReference>
<dbReference type="NCBIfam" id="NF004018">
    <property type="entry name" value="PRK05480.1"/>
    <property type="match status" value="1"/>
</dbReference>
<dbReference type="NCBIfam" id="TIGR00235">
    <property type="entry name" value="udk"/>
    <property type="match status" value="1"/>
</dbReference>
<dbReference type="PANTHER" id="PTHR10285">
    <property type="entry name" value="URIDINE KINASE"/>
    <property type="match status" value="1"/>
</dbReference>
<dbReference type="Pfam" id="PF00485">
    <property type="entry name" value="PRK"/>
    <property type="match status" value="1"/>
</dbReference>
<dbReference type="PRINTS" id="PR00988">
    <property type="entry name" value="URIDINKINASE"/>
</dbReference>
<dbReference type="SMART" id="SM00382">
    <property type="entry name" value="AAA"/>
    <property type="match status" value="1"/>
</dbReference>
<dbReference type="SUPFAM" id="SSF52540">
    <property type="entry name" value="P-loop containing nucleoside triphosphate hydrolases"/>
    <property type="match status" value="1"/>
</dbReference>
<feature type="chain" id="PRO_1000129078" description="Uridine kinase">
    <location>
        <begin position="1"/>
        <end position="211"/>
    </location>
</feature>
<feature type="binding site" evidence="1">
    <location>
        <begin position="13"/>
        <end position="20"/>
    </location>
    <ligand>
        <name>ATP</name>
        <dbReference type="ChEBI" id="CHEBI:30616"/>
    </ligand>
</feature>
<reference key="1">
    <citation type="journal article" date="2004" name="Proc. Natl. Acad. Sci. U.S.A.">
        <title>The genome sequence of the probiotic intestinal bacterium Lactobacillus johnsonii NCC 533.</title>
        <authorList>
            <person name="Pridmore R.D."/>
            <person name="Berger B."/>
            <person name="Desiere F."/>
            <person name="Vilanova D."/>
            <person name="Barretto C."/>
            <person name="Pittet A.-C."/>
            <person name="Zwahlen M.-C."/>
            <person name="Rouvet M."/>
            <person name="Altermann E."/>
            <person name="Barrangou R."/>
            <person name="Mollet B."/>
            <person name="Mercenier A."/>
            <person name="Klaenhammer T."/>
            <person name="Arigoni F."/>
            <person name="Schell M.A."/>
        </authorList>
    </citation>
    <scope>NUCLEOTIDE SEQUENCE [LARGE SCALE GENOMIC DNA]</scope>
    <source>
        <strain>CNCM I-1225 / La1 / NCC 533</strain>
    </source>
</reference>
<gene>
    <name evidence="1" type="primary">udk</name>
    <name type="ordered locus">LJ_0763</name>
</gene>
<comment type="catalytic activity">
    <reaction evidence="1">
        <text>uridine + ATP = UMP + ADP + H(+)</text>
        <dbReference type="Rhea" id="RHEA:16825"/>
        <dbReference type="ChEBI" id="CHEBI:15378"/>
        <dbReference type="ChEBI" id="CHEBI:16704"/>
        <dbReference type="ChEBI" id="CHEBI:30616"/>
        <dbReference type="ChEBI" id="CHEBI:57865"/>
        <dbReference type="ChEBI" id="CHEBI:456216"/>
        <dbReference type="EC" id="2.7.1.48"/>
    </reaction>
</comment>
<comment type="catalytic activity">
    <reaction evidence="1">
        <text>cytidine + ATP = CMP + ADP + H(+)</text>
        <dbReference type="Rhea" id="RHEA:24674"/>
        <dbReference type="ChEBI" id="CHEBI:15378"/>
        <dbReference type="ChEBI" id="CHEBI:17562"/>
        <dbReference type="ChEBI" id="CHEBI:30616"/>
        <dbReference type="ChEBI" id="CHEBI:60377"/>
        <dbReference type="ChEBI" id="CHEBI:456216"/>
        <dbReference type="EC" id="2.7.1.48"/>
    </reaction>
</comment>
<comment type="pathway">
    <text evidence="1">Pyrimidine metabolism; CTP biosynthesis via salvage pathway; CTP from cytidine: step 1/3.</text>
</comment>
<comment type="pathway">
    <text evidence="1">Pyrimidine metabolism; UMP biosynthesis via salvage pathway; UMP from uridine: step 1/1.</text>
</comment>
<comment type="subcellular location">
    <subcellularLocation>
        <location evidence="1">Cytoplasm</location>
    </subcellularLocation>
</comment>
<comment type="similarity">
    <text evidence="1">Belongs to the uridine kinase family.</text>
</comment>
<organism>
    <name type="scientific">Lactobacillus johnsonii (strain CNCM I-12250 / La1 / NCC 533)</name>
    <dbReference type="NCBI Taxonomy" id="257314"/>
    <lineage>
        <taxon>Bacteria</taxon>
        <taxon>Bacillati</taxon>
        <taxon>Bacillota</taxon>
        <taxon>Bacilli</taxon>
        <taxon>Lactobacillales</taxon>
        <taxon>Lactobacillaceae</taxon>
        <taxon>Lactobacillus</taxon>
    </lineage>
</organism>